<gene>
    <name evidence="1" type="primary">rpoC</name>
    <name type="ordered locus">ESA_03689</name>
</gene>
<sequence>MKDLLKFLKAQTKTEEFDAIKIALASPDMIRSWSFGEVKKPETINYRTFKPERDGLFCARIFGPVKDYECLCGKYKRLKHRGVICEKCGVEVTQTKVRRERMGHIELASPTAHIWFLKSLPSRIGLLLDMPLRDIERVLYFESYVVIEGGMTNLERSQILTEEQYLDALEEFGDEFDAKMGAEAIQALLKSMDLEAECEQLREELNETNSETKRKKLTKRIKLLEAFVQSGNKPEWMILTVLPVLPPDLRPLVPLDGGRFATSDLNDLYRRVINRNNRLKRLLDLAAPDIIVRNEKRMLQEAVDALLDNGRRGRAITGSNKRPLKSLADMIKGKQGRFRQNLLGKRVDYSGRSVITVGPYLRLHQCGLPKKMALELFKPFIYGKLELRGLATTIKAAKKMVEREEAVVWDILDEVIREHPVLLNRAPTLHRLGIQAFEPVLIEGKAIQLHPLVCAAYNADFDGDQMAVHVPLTLEAQLEARALMMSTNNILSPANGEPIIVPSQDVVLGLYYMTRDKINAKGEGMVLTGPKEAERLYRSGQAELHARVKVRITEYEKDANGEFVAKTSLIDTTVGRAILWMIVPKGLPFSIVNQPLGKKAISKMLNTCYRILGLKPTVIFADQTMYTGFAYAARSGASVGIDDMVIPAKKAEIIAEAEAEVAEIQEQFQSGLVTAGERYNKVIDIWAAANDRVSKAMMDNLQTETVINRNGEEEQQVSFNSIYMMADSGARGSAAQIRQLAGMRGLMAKPDGSIIETPITANFREGLNVLQYFISTHGARKGLADTALKTANSGYLTRRLVDVAQDLVVTEDDCGTLEGITMTPVIEGGDVKEPLRDRVLGRVTAEDVLKPGTADILVARNTLLNEQWCDILEANSVDSVKVRSVVTCDTDFGVCAHCYGRDLARGHIINKGEAIGVIAAQSIGEPGTQLTMRTFHIGGAASRAAAESSIQVKNKGSIRLSNAKSVVNSSGKLVVTSRNTELKLIDEFGRTKESYKVPYGAVMAKGDGEQVAGGETVANWDPHTMPVITEVAGYIRFTDMIDGQTITRQTDELTGLSSLVVLDSAERTAGGKDLRPALKIVDANGNDVLIPGTDMPAQYFLPGKAIVQLEDGVQISSGDTLARIPQESGGTKDITGGLPRVADLFEARRPKEPAILAEVAGIVSFGKETKGKRRLVITPVDGGDAYEEMIPKWRQLNVFEGERVERGDVISDGPEAPHDILRLRGVQAVTRYIVNEVQDVYRLQGVKINDKHIEVIVRQMLRKATIMDAGSSEFLEGEQVEYSRVKIANRELEANGKVSATYMRDLLGITKASLATESFISAASFQETTRVLTEAAVAGKRDELRGLKENVIVGRLIPAGTGYAYHQDRMRRRAAGELPAAPQVTAEDASASLAELLNAGLGGNDNE</sequence>
<feature type="chain" id="PRO_0000353351" description="DNA-directed RNA polymerase subunit beta'">
    <location>
        <begin position="1"/>
        <end position="1407"/>
    </location>
</feature>
<feature type="binding site" evidence="1">
    <location>
        <position position="70"/>
    </location>
    <ligand>
        <name>Zn(2+)</name>
        <dbReference type="ChEBI" id="CHEBI:29105"/>
        <label>1</label>
    </ligand>
</feature>
<feature type="binding site" evidence="1">
    <location>
        <position position="72"/>
    </location>
    <ligand>
        <name>Zn(2+)</name>
        <dbReference type="ChEBI" id="CHEBI:29105"/>
        <label>1</label>
    </ligand>
</feature>
<feature type="binding site" evidence="1">
    <location>
        <position position="85"/>
    </location>
    <ligand>
        <name>Zn(2+)</name>
        <dbReference type="ChEBI" id="CHEBI:29105"/>
        <label>1</label>
    </ligand>
</feature>
<feature type="binding site" evidence="1">
    <location>
        <position position="88"/>
    </location>
    <ligand>
        <name>Zn(2+)</name>
        <dbReference type="ChEBI" id="CHEBI:29105"/>
        <label>1</label>
    </ligand>
</feature>
<feature type="binding site" evidence="1">
    <location>
        <position position="460"/>
    </location>
    <ligand>
        <name>Mg(2+)</name>
        <dbReference type="ChEBI" id="CHEBI:18420"/>
    </ligand>
</feature>
<feature type="binding site" evidence="1">
    <location>
        <position position="462"/>
    </location>
    <ligand>
        <name>Mg(2+)</name>
        <dbReference type="ChEBI" id="CHEBI:18420"/>
    </ligand>
</feature>
<feature type="binding site" evidence="1">
    <location>
        <position position="464"/>
    </location>
    <ligand>
        <name>Mg(2+)</name>
        <dbReference type="ChEBI" id="CHEBI:18420"/>
    </ligand>
</feature>
<feature type="binding site" evidence="1">
    <location>
        <position position="814"/>
    </location>
    <ligand>
        <name>Zn(2+)</name>
        <dbReference type="ChEBI" id="CHEBI:29105"/>
        <label>2</label>
    </ligand>
</feature>
<feature type="binding site" evidence="1">
    <location>
        <position position="888"/>
    </location>
    <ligand>
        <name>Zn(2+)</name>
        <dbReference type="ChEBI" id="CHEBI:29105"/>
        <label>2</label>
    </ligand>
</feature>
<feature type="binding site" evidence="1">
    <location>
        <position position="895"/>
    </location>
    <ligand>
        <name>Zn(2+)</name>
        <dbReference type="ChEBI" id="CHEBI:29105"/>
        <label>2</label>
    </ligand>
</feature>
<feature type="binding site" evidence="1">
    <location>
        <position position="898"/>
    </location>
    <ligand>
        <name>Zn(2+)</name>
        <dbReference type="ChEBI" id="CHEBI:29105"/>
        <label>2</label>
    </ligand>
</feature>
<name>RPOC_CROS8</name>
<proteinExistence type="inferred from homology"/>
<protein>
    <recommendedName>
        <fullName evidence="1">DNA-directed RNA polymerase subunit beta'</fullName>
        <shortName evidence="1">RNAP subunit beta'</shortName>
        <ecNumber evidence="1">2.7.7.6</ecNumber>
    </recommendedName>
    <alternativeName>
        <fullName evidence="1">RNA polymerase subunit beta'</fullName>
    </alternativeName>
    <alternativeName>
        <fullName evidence="1">Transcriptase subunit beta'</fullName>
    </alternativeName>
</protein>
<dbReference type="EC" id="2.7.7.6" evidence="1"/>
<dbReference type="EMBL" id="CP000783">
    <property type="protein sequence ID" value="ABU78893.1"/>
    <property type="molecule type" value="Genomic_DNA"/>
</dbReference>
<dbReference type="RefSeq" id="WP_012126016.1">
    <property type="nucleotide sequence ID" value="NC_009778.1"/>
</dbReference>
<dbReference type="SMR" id="A7MQQ8"/>
<dbReference type="KEGG" id="esa:ESA_03689"/>
<dbReference type="PATRIC" id="fig|290339.8.peg.3285"/>
<dbReference type="HOGENOM" id="CLU_000524_3_1_6"/>
<dbReference type="Proteomes" id="UP000000260">
    <property type="component" value="Chromosome"/>
</dbReference>
<dbReference type="GO" id="GO:0000428">
    <property type="term" value="C:DNA-directed RNA polymerase complex"/>
    <property type="evidence" value="ECO:0007669"/>
    <property type="project" value="UniProtKB-KW"/>
</dbReference>
<dbReference type="GO" id="GO:0003677">
    <property type="term" value="F:DNA binding"/>
    <property type="evidence" value="ECO:0007669"/>
    <property type="project" value="UniProtKB-UniRule"/>
</dbReference>
<dbReference type="GO" id="GO:0003899">
    <property type="term" value="F:DNA-directed RNA polymerase activity"/>
    <property type="evidence" value="ECO:0007669"/>
    <property type="project" value="UniProtKB-UniRule"/>
</dbReference>
<dbReference type="GO" id="GO:0000287">
    <property type="term" value="F:magnesium ion binding"/>
    <property type="evidence" value="ECO:0007669"/>
    <property type="project" value="UniProtKB-UniRule"/>
</dbReference>
<dbReference type="GO" id="GO:0008270">
    <property type="term" value="F:zinc ion binding"/>
    <property type="evidence" value="ECO:0007669"/>
    <property type="project" value="UniProtKB-UniRule"/>
</dbReference>
<dbReference type="GO" id="GO:0006351">
    <property type="term" value="P:DNA-templated transcription"/>
    <property type="evidence" value="ECO:0007669"/>
    <property type="project" value="UniProtKB-UniRule"/>
</dbReference>
<dbReference type="CDD" id="cd02655">
    <property type="entry name" value="RNAP_beta'_C"/>
    <property type="match status" value="1"/>
</dbReference>
<dbReference type="CDD" id="cd01609">
    <property type="entry name" value="RNAP_beta'_N"/>
    <property type="match status" value="1"/>
</dbReference>
<dbReference type="FunFam" id="1.10.132.30:FF:000003">
    <property type="entry name" value="DNA-directed RNA polymerase subunit beta"/>
    <property type="match status" value="1"/>
</dbReference>
<dbReference type="FunFam" id="1.10.150.390:FF:000002">
    <property type="entry name" value="DNA-directed RNA polymerase subunit beta"/>
    <property type="match status" value="1"/>
</dbReference>
<dbReference type="FunFam" id="1.10.274.100:FF:000002">
    <property type="entry name" value="DNA-directed RNA polymerase subunit beta"/>
    <property type="match status" value="1"/>
</dbReference>
<dbReference type="FunFam" id="1.10.40.90:FF:000001">
    <property type="entry name" value="DNA-directed RNA polymerase subunit beta"/>
    <property type="match status" value="1"/>
</dbReference>
<dbReference type="FunFam" id="2.40.50.100:FF:000012">
    <property type="entry name" value="DNA-directed RNA polymerase subunit beta"/>
    <property type="match status" value="1"/>
</dbReference>
<dbReference type="FunFam" id="2.40.50.100:FF:000016">
    <property type="entry name" value="DNA-directed RNA polymerase subunit beta"/>
    <property type="match status" value="1"/>
</dbReference>
<dbReference type="FunFam" id="2.40.50.100:FF:000019">
    <property type="entry name" value="DNA-directed RNA polymerase subunit beta"/>
    <property type="match status" value="1"/>
</dbReference>
<dbReference type="FunFam" id="4.10.860.120:FF:000001">
    <property type="entry name" value="DNA-directed RNA polymerase subunit beta"/>
    <property type="match status" value="1"/>
</dbReference>
<dbReference type="Gene3D" id="1.10.132.30">
    <property type="match status" value="1"/>
</dbReference>
<dbReference type="Gene3D" id="1.10.150.390">
    <property type="match status" value="1"/>
</dbReference>
<dbReference type="Gene3D" id="1.10.1790.20">
    <property type="match status" value="1"/>
</dbReference>
<dbReference type="Gene3D" id="1.10.40.90">
    <property type="match status" value="1"/>
</dbReference>
<dbReference type="Gene3D" id="2.40.40.20">
    <property type="match status" value="1"/>
</dbReference>
<dbReference type="Gene3D" id="2.40.50.100">
    <property type="match status" value="3"/>
</dbReference>
<dbReference type="Gene3D" id="4.10.860.120">
    <property type="entry name" value="RNA polymerase II, clamp domain"/>
    <property type="match status" value="1"/>
</dbReference>
<dbReference type="Gene3D" id="1.10.274.100">
    <property type="entry name" value="RNA polymerase Rpb1, domain 3"/>
    <property type="match status" value="1"/>
</dbReference>
<dbReference type="HAMAP" id="MF_01322">
    <property type="entry name" value="RNApol_bact_RpoC"/>
    <property type="match status" value="1"/>
</dbReference>
<dbReference type="InterPro" id="IPR045867">
    <property type="entry name" value="DNA-dir_RpoC_beta_prime"/>
</dbReference>
<dbReference type="InterPro" id="IPR012754">
    <property type="entry name" value="DNA-dir_RpoC_beta_prime_bact"/>
</dbReference>
<dbReference type="InterPro" id="IPR000722">
    <property type="entry name" value="RNA_pol_asu"/>
</dbReference>
<dbReference type="InterPro" id="IPR006592">
    <property type="entry name" value="RNA_pol_N"/>
</dbReference>
<dbReference type="InterPro" id="IPR007080">
    <property type="entry name" value="RNA_pol_Rpb1_1"/>
</dbReference>
<dbReference type="InterPro" id="IPR007066">
    <property type="entry name" value="RNA_pol_Rpb1_3"/>
</dbReference>
<dbReference type="InterPro" id="IPR042102">
    <property type="entry name" value="RNA_pol_Rpb1_3_sf"/>
</dbReference>
<dbReference type="InterPro" id="IPR007083">
    <property type="entry name" value="RNA_pol_Rpb1_4"/>
</dbReference>
<dbReference type="InterPro" id="IPR007081">
    <property type="entry name" value="RNA_pol_Rpb1_5"/>
</dbReference>
<dbReference type="InterPro" id="IPR044893">
    <property type="entry name" value="RNA_pol_Rpb1_clamp_domain"/>
</dbReference>
<dbReference type="InterPro" id="IPR038120">
    <property type="entry name" value="Rpb1_funnel_sf"/>
</dbReference>
<dbReference type="NCBIfam" id="TIGR02386">
    <property type="entry name" value="rpoC_TIGR"/>
    <property type="match status" value="1"/>
</dbReference>
<dbReference type="PANTHER" id="PTHR19376">
    <property type="entry name" value="DNA-DIRECTED RNA POLYMERASE"/>
    <property type="match status" value="1"/>
</dbReference>
<dbReference type="PANTHER" id="PTHR19376:SF54">
    <property type="entry name" value="DNA-DIRECTED RNA POLYMERASE SUBUNIT BETA"/>
    <property type="match status" value="1"/>
</dbReference>
<dbReference type="Pfam" id="PF04997">
    <property type="entry name" value="RNA_pol_Rpb1_1"/>
    <property type="match status" value="1"/>
</dbReference>
<dbReference type="Pfam" id="PF00623">
    <property type="entry name" value="RNA_pol_Rpb1_2"/>
    <property type="match status" value="2"/>
</dbReference>
<dbReference type="Pfam" id="PF04983">
    <property type="entry name" value="RNA_pol_Rpb1_3"/>
    <property type="match status" value="1"/>
</dbReference>
<dbReference type="Pfam" id="PF05000">
    <property type="entry name" value="RNA_pol_Rpb1_4"/>
    <property type="match status" value="1"/>
</dbReference>
<dbReference type="Pfam" id="PF04998">
    <property type="entry name" value="RNA_pol_Rpb1_5"/>
    <property type="match status" value="1"/>
</dbReference>
<dbReference type="SMART" id="SM00663">
    <property type="entry name" value="RPOLA_N"/>
    <property type="match status" value="1"/>
</dbReference>
<dbReference type="SUPFAM" id="SSF64484">
    <property type="entry name" value="beta and beta-prime subunits of DNA dependent RNA-polymerase"/>
    <property type="match status" value="1"/>
</dbReference>
<keyword id="KW-0240">DNA-directed RNA polymerase</keyword>
<keyword id="KW-0460">Magnesium</keyword>
<keyword id="KW-0479">Metal-binding</keyword>
<keyword id="KW-0548">Nucleotidyltransferase</keyword>
<keyword id="KW-1185">Reference proteome</keyword>
<keyword id="KW-0804">Transcription</keyword>
<keyword id="KW-0808">Transferase</keyword>
<keyword id="KW-0862">Zinc</keyword>
<accession>A7MQQ8</accession>
<evidence type="ECO:0000255" key="1">
    <source>
        <dbReference type="HAMAP-Rule" id="MF_01322"/>
    </source>
</evidence>
<organism>
    <name type="scientific">Cronobacter sakazakii (strain ATCC BAA-894)</name>
    <name type="common">Enterobacter sakazakii</name>
    <dbReference type="NCBI Taxonomy" id="290339"/>
    <lineage>
        <taxon>Bacteria</taxon>
        <taxon>Pseudomonadati</taxon>
        <taxon>Pseudomonadota</taxon>
        <taxon>Gammaproteobacteria</taxon>
        <taxon>Enterobacterales</taxon>
        <taxon>Enterobacteriaceae</taxon>
        <taxon>Cronobacter</taxon>
    </lineage>
</organism>
<reference key="1">
    <citation type="journal article" date="2010" name="PLoS ONE">
        <title>Genome sequence of Cronobacter sakazakii BAA-894 and comparative genomic hybridization analysis with other Cronobacter species.</title>
        <authorList>
            <person name="Kucerova E."/>
            <person name="Clifton S.W."/>
            <person name="Xia X.Q."/>
            <person name="Long F."/>
            <person name="Porwollik S."/>
            <person name="Fulton L."/>
            <person name="Fronick C."/>
            <person name="Minx P."/>
            <person name="Kyung K."/>
            <person name="Warren W."/>
            <person name="Fulton R."/>
            <person name="Feng D."/>
            <person name="Wollam A."/>
            <person name="Shah N."/>
            <person name="Bhonagiri V."/>
            <person name="Nash W.E."/>
            <person name="Hallsworth-Pepin K."/>
            <person name="Wilson R.K."/>
            <person name="McClelland M."/>
            <person name="Forsythe S.J."/>
        </authorList>
    </citation>
    <scope>NUCLEOTIDE SEQUENCE [LARGE SCALE GENOMIC DNA]</scope>
    <source>
        <strain>ATCC BAA-894</strain>
    </source>
</reference>
<comment type="function">
    <text evidence="1">DNA-dependent RNA polymerase catalyzes the transcription of DNA into RNA using the four ribonucleoside triphosphates as substrates.</text>
</comment>
<comment type="catalytic activity">
    <reaction evidence="1">
        <text>RNA(n) + a ribonucleoside 5'-triphosphate = RNA(n+1) + diphosphate</text>
        <dbReference type="Rhea" id="RHEA:21248"/>
        <dbReference type="Rhea" id="RHEA-COMP:14527"/>
        <dbReference type="Rhea" id="RHEA-COMP:17342"/>
        <dbReference type="ChEBI" id="CHEBI:33019"/>
        <dbReference type="ChEBI" id="CHEBI:61557"/>
        <dbReference type="ChEBI" id="CHEBI:140395"/>
        <dbReference type="EC" id="2.7.7.6"/>
    </reaction>
</comment>
<comment type="cofactor">
    <cofactor evidence="1">
        <name>Mg(2+)</name>
        <dbReference type="ChEBI" id="CHEBI:18420"/>
    </cofactor>
    <text evidence="1">Binds 1 Mg(2+) ion per subunit.</text>
</comment>
<comment type="cofactor">
    <cofactor evidence="1">
        <name>Zn(2+)</name>
        <dbReference type="ChEBI" id="CHEBI:29105"/>
    </cofactor>
    <text evidence="1">Binds 2 Zn(2+) ions per subunit.</text>
</comment>
<comment type="subunit">
    <text evidence="1">The RNAP catalytic core consists of 2 alpha, 1 beta, 1 beta' and 1 omega subunit. When a sigma factor is associated with the core the holoenzyme is formed, which can initiate transcription.</text>
</comment>
<comment type="similarity">
    <text evidence="1">Belongs to the RNA polymerase beta' chain family.</text>
</comment>